<sequence length="212" mass="24121">MNSQQCVIIAIAGASASGKSLIAKTIFDELRRDLGTDQIGVINEDAYYRDQSHLSMDERVLTNYDHPKALDHQLLCTHLQLLKSGEAVDIPCYSYTEHTRMAETVKMTPKKVIILEGILLLTDPKLRELMDASVFMDTPLDICFLRRLTRDVAERGRTMESVISQYKKTVRPMFLQFIEPSKQYADIIVPRGGKNRIATDILKTRIQHLLAK</sequence>
<evidence type="ECO:0000255" key="1">
    <source>
        <dbReference type="HAMAP-Rule" id="MF_00551"/>
    </source>
</evidence>
<gene>
    <name evidence="1" type="primary">udk</name>
    <name type="ordered locus">Shewmr4_1657</name>
</gene>
<proteinExistence type="inferred from homology"/>
<name>URK_SHESM</name>
<protein>
    <recommendedName>
        <fullName evidence="1">Uridine kinase</fullName>
        <ecNumber evidence="1">2.7.1.48</ecNumber>
    </recommendedName>
    <alternativeName>
        <fullName evidence="1">Cytidine monophosphokinase</fullName>
    </alternativeName>
    <alternativeName>
        <fullName evidence="1">Uridine monophosphokinase</fullName>
    </alternativeName>
</protein>
<organism>
    <name type="scientific">Shewanella sp. (strain MR-4)</name>
    <dbReference type="NCBI Taxonomy" id="60480"/>
    <lineage>
        <taxon>Bacteria</taxon>
        <taxon>Pseudomonadati</taxon>
        <taxon>Pseudomonadota</taxon>
        <taxon>Gammaproteobacteria</taxon>
        <taxon>Alteromonadales</taxon>
        <taxon>Shewanellaceae</taxon>
        <taxon>Shewanella</taxon>
    </lineage>
</organism>
<accession>Q0HJN4</accession>
<comment type="catalytic activity">
    <reaction evidence="1">
        <text>uridine + ATP = UMP + ADP + H(+)</text>
        <dbReference type="Rhea" id="RHEA:16825"/>
        <dbReference type="ChEBI" id="CHEBI:15378"/>
        <dbReference type="ChEBI" id="CHEBI:16704"/>
        <dbReference type="ChEBI" id="CHEBI:30616"/>
        <dbReference type="ChEBI" id="CHEBI:57865"/>
        <dbReference type="ChEBI" id="CHEBI:456216"/>
        <dbReference type="EC" id="2.7.1.48"/>
    </reaction>
</comment>
<comment type="catalytic activity">
    <reaction evidence="1">
        <text>cytidine + ATP = CMP + ADP + H(+)</text>
        <dbReference type="Rhea" id="RHEA:24674"/>
        <dbReference type="ChEBI" id="CHEBI:15378"/>
        <dbReference type="ChEBI" id="CHEBI:17562"/>
        <dbReference type="ChEBI" id="CHEBI:30616"/>
        <dbReference type="ChEBI" id="CHEBI:60377"/>
        <dbReference type="ChEBI" id="CHEBI:456216"/>
        <dbReference type="EC" id="2.7.1.48"/>
    </reaction>
</comment>
<comment type="pathway">
    <text evidence="1">Pyrimidine metabolism; CTP biosynthesis via salvage pathway; CTP from cytidine: step 1/3.</text>
</comment>
<comment type="pathway">
    <text evidence="1">Pyrimidine metabolism; UMP biosynthesis via salvage pathway; UMP from uridine: step 1/1.</text>
</comment>
<comment type="subcellular location">
    <subcellularLocation>
        <location evidence="1">Cytoplasm</location>
    </subcellularLocation>
</comment>
<comment type="similarity">
    <text evidence="1">Belongs to the uridine kinase family.</text>
</comment>
<keyword id="KW-0067">ATP-binding</keyword>
<keyword id="KW-0963">Cytoplasm</keyword>
<keyword id="KW-0418">Kinase</keyword>
<keyword id="KW-0547">Nucleotide-binding</keyword>
<keyword id="KW-0808">Transferase</keyword>
<dbReference type="EC" id="2.7.1.48" evidence="1"/>
<dbReference type="EMBL" id="CP000446">
    <property type="protein sequence ID" value="ABI38733.1"/>
    <property type="molecule type" value="Genomic_DNA"/>
</dbReference>
<dbReference type="RefSeq" id="WP_011072566.1">
    <property type="nucleotide sequence ID" value="NC_008321.1"/>
</dbReference>
<dbReference type="SMR" id="Q0HJN4"/>
<dbReference type="GeneID" id="94727753"/>
<dbReference type="KEGG" id="she:Shewmr4_1657"/>
<dbReference type="HOGENOM" id="CLU_021278_1_2_6"/>
<dbReference type="UniPathway" id="UPA00574">
    <property type="reaction ID" value="UER00637"/>
</dbReference>
<dbReference type="UniPathway" id="UPA00579">
    <property type="reaction ID" value="UER00640"/>
</dbReference>
<dbReference type="GO" id="GO:0005737">
    <property type="term" value="C:cytoplasm"/>
    <property type="evidence" value="ECO:0007669"/>
    <property type="project" value="UniProtKB-SubCell"/>
</dbReference>
<dbReference type="GO" id="GO:0005524">
    <property type="term" value="F:ATP binding"/>
    <property type="evidence" value="ECO:0007669"/>
    <property type="project" value="UniProtKB-UniRule"/>
</dbReference>
<dbReference type="GO" id="GO:0043771">
    <property type="term" value="F:cytidine kinase activity"/>
    <property type="evidence" value="ECO:0007669"/>
    <property type="project" value="RHEA"/>
</dbReference>
<dbReference type="GO" id="GO:0004849">
    <property type="term" value="F:uridine kinase activity"/>
    <property type="evidence" value="ECO:0007669"/>
    <property type="project" value="UniProtKB-UniRule"/>
</dbReference>
<dbReference type="GO" id="GO:0044211">
    <property type="term" value="P:CTP salvage"/>
    <property type="evidence" value="ECO:0007669"/>
    <property type="project" value="UniProtKB-UniRule"/>
</dbReference>
<dbReference type="GO" id="GO:0044206">
    <property type="term" value="P:UMP salvage"/>
    <property type="evidence" value="ECO:0007669"/>
    <property type="project" value="UniProtKB-UniRule"/>
</dbReference>
<dbReference type="CDD" id="cd02023">
    <property type="entry name" value="UMPK"/>
    <property type="match status" value="1"/>
</dbReference>
<dbReference type="Gene3D" id="3.40.50.300">
    <property type="entry name" value="P-loop containing nucleotide triphosphate hydrolases"/>
    <property type="match status" value="1"/>
</dbReference>
<dbReference type="HAMAP" id="MF_00551">
    <property type="entry name" value="Uridine_kinase"/>
    <property type="match status" value="1"/>
</dbReference>
<dbReference type="InterPro" id="IPR027417">
    <property type="entry name" value="P-loop_NTPase"/>
</dbReference>
<dbReference type="InterPro" id="IPR006083">
    <property type="entry name" value="PRK/URK"/>
</dbReference>
<dbReference type="InterPro" id="IPR026008">
    <property type="entry name" value="Uridine_kinase"/>
</dbReference>
<dbReference type="InterPro" id="IPR000764">
    <property type="entry name" value="Uridine_kinase-like"/>
</dbReference>
<dbReference type="NCBIfam" id="NF004018">
    <property type="entry name" value="PRK05480.1"/>
    <property type="match status" value="1"/>
</dbReference>
<dbReference type="NCBIfam" id="TIGR00235">
    <property type="entry name" value="udk"/>
    <property type="match status" value="1"/>
</dbReference>
<dbReference type="PANTHER" id="PTHR10285">
    <property type="entry name" value="URIDINE KINASE"/>
    <property type="match status" value="1"/>
</dbReference>
<dbReference type="Pfam" id="PF00485">
    <property type="entry name" value="PRK"/>
    <property type="match status" value="1"/>
</dbReference>
<dbReference type="PRINTS" id="PR00988">
    <property type="entry name" value="URIDINKINASE"/>
</dbReference>
<dbReference type="SUPFAM" id="SSF52540">
    <property type="entry name" value="P-loop containing nucleoside triphosphate hydrolases"/>
    <property type="match status" value="1"/>
</dbReference>
<feature type="chain" id="PRO_1000017897" description="Uridine kinase">
    <location>
        <begin position="1"/>
        <end position="212"/>
    </location>
</feature>
<feature type="binding site" evidence="1">
    <location>
        <begin position="13"/>
        <end position="20"/>
    </location>
    <ligand>
        <name>ATP</name>
        <dbReference type="ChEBI" id="CHEBI:30616"/>
    </ligand>
</feature>
<reference key="1">
    <citation type="submission" date="2006-08" db="EMBL/GenBank/DDBJ databases">
        <title>Complete sequence of Shewanella sp. MR-4.</title>
        <authorList>
            <consortium name="US DOE Joint Genome Institute"/>
            <person name="Copeland A."/>
            <person name="Lucas S."/>
            <person name="Lapidus A."/>
            <person name="Barry K."/>
            <person name="Detter J.C."/>
            <person name="Glavina del Rio T."/>
            <person name="Hammon N."/>
            <person name="Israni S."/>
            <person name="Dalin E."/>
            <person name="Tice H."/>
            <person name="Pitluck S."/>
            <person name="Kiss H."/>
            <person name="Brettin T."/>
            <person name="Bruce D."/>
            <person name="Han C."/>
            <person name="Tapia R."/>
            <person name="Gilna P."/>
            <person name="Schmutz J."/>
            <person name="Larimer F."/>
            <person name="Land M."/>
            <person name="Hauser L."/>
            <person name="Kyrpides N."/>
            <person name="Mikhailova N."/>
            <person name="Nealson K."/>
            <person name="Konstantinidis K."/>
            <person name="Klappenbach J."/>
            <person name="Tiedje J."/>
            <person name="Richardson P."/>
        </authorList>
    </citation>
    <scope>NUCLEOTIDE SEQUENCE [LARGE SCALE GENOMIC DNA]</scope>
    <source>
        <strain>MR-4</strain>
    </source>
</reference>